<protein>
    <recommendedName>
        <fullName>MATH domain and coiled-coil domain-containing protein At3g58200</fullName>
    </recommendedName>
    <alternativeName>
        <fullName>RTM3-like protein At3g58200</fullName>
    </alternativeName>
</protein>
<reference key="1">
    <citation type="journal article" date="2000" name="Nature">
        <title>Sequence and analysis of chromosome 3 of the plant Arabidopsis thaliana.</title>
        <authorList>
            <person name="Salanoubat M."/>
            <person name="Lemcke K."/>
            <person name="Rieger M."/>
            <person name="Ansorge W."/>
            <person name="Unseld M."/>
            <person name="Fartmann B."/>
            <person name="Valle G."/>
            <person name="Bloecker H."/>
            <person name="Perez-Alonso M."/>
            <person name="Obermaier B."/>
            <person name="Delseny M."/>
            <person name="Boutry M."/>
            <person name="Grivell L.A."/>
            <person name="Mache R."/>
            <person name="Puigdomenech P."/>
            <person name="De Simone V."/>
            <person name="Choisne N."/>
            <person name="Artiguenave F."/>
            <person name="Robert C."/>
            <person name="Brottier P."/>
            <person name="Wincker P."/>
            <person name="Cattolico L."/>
            <person name="Weissenbach J."/>
            <person name="Saurin W."/>
            <person name="Quetier F."/>
            <person name="Schaefer M."/>
            <person name="Mueller-Auer S."/>
            <person name="Gabel C."/>
            <person name="Fuchs M."/>
            <person name="Benes V."/>
            <person name="Wurmbach E."/>
            <person name="Drzonek H."/>
            <person name="Erfle H."/>
            <person name="Jordan N."/>
            <person name="Bangert S."/>
            <person name="Wiedelmann R."/>
            <person name="Kranz H."/>
            <person name="Voss H."/>
            <person name="Holland R."/>
            <person name="Brandt P."/>
            <person name="Nyakatura G."/>
            <person name="Vezzi A."/>
            <person name="D'Angelo M."/>
            <person name="Pallavicini A."/>
            <person name="Toppo S."/>
            <person name="Simionati B."/>
            <person name="Conrad A."/>
            <person name="Hornischer K."/>
            <person name="Kauer G."/>
            <person name="Loehnert T.-H."/>
            <person name="Nordsiek G."/>
            <person name="Reichelt J."/>
            <person name="Scharfe M."/>
            <person name="Schoen O."/>
            <person name="Bargues M."/>
            <person name="Terol J."/>
            <person name="Climent J."/>
            <person name="Navarro P."/>
            <person name="Collado C."/>
            <person name="Perez-Perez A."/>
            <person name="Ottenwaelder B."/>
            <person name="Duchemin D."/>
            <person name="Cooke R."/>
            <person name="Laudie M."/>
            <person name="Berger-Llauro C."/>
            <person name="Purnelle B."/>
            <person name="Masuy D."/>
            <person name="de Haan M."/>
            <person name="Maarse A.C."/>
            <person name="Alcaraz J.-P."/>
            <person name="Cottet A."/>
            <person name="Casacuberta E."/>
            <person name="Monfort A."/>
            <person name="Argiriou A."/>
            <person name="Flores M."/>
            <person name="Liguori R."/>
            <person name="Vitale D."/>
            <person name="Mannhaupt G."/>
            <person name="Haase D."/>
            <person name="Schoof H."/>
            <person name="Rudd S."/>
            <person name="Zaccaria P."/>
            <person name="Mewes H.-W."/>
            <person name="Mayer K.F.X."/>
            <person name="Kaul S."/>
            <person name="Town C.D."/>
            <person name="Koo H.L."/>
            <person name="Tallon L.J."/>
            <person name="Jenkins J."/>
            <person name="Rooney T."/>
            <person name="Rizzo M."/>
            <person name="Walts A."/>
            <person name="Utterback T."/>
            <person name="Fujii C.Y."/>
            <person name="Shea T.P."/>
            <person name="Creasy T.H."/>
            <person name="Haas B."/>
            <person name="Maiti R."/>
            <person name="Wu D."/>
            <person name="Peterson J."/>
            <person name="Van Aken S."/>
            <person name="Pai G."/>
            <person name="Militscher J."/>
            <person name="Sellers P."/>
            <person name="Gill J.E."/>
            <person name="Feldblyum T.V."/>
            <person name="Preuss D."/>
            <person name="Lin X."/>
            <person name="Nierman W.C."/>
            <person name="Salzberg S.L."/>
            <person name="White O."/>
            <person name="Venter J.C."/>
            <person name="Fraser C.M."/>
            <person name="Kaneko T."/>
            <person name="Nakamura Y."/>
            <person name="Sato S."/>
            <person name="Kato T."/>
            <person name="Asamizu E."/>
            <person name="Sasamoto S."/>
            <person name="Kimura T."/>
            <person name="Idesawa K."/>
            <person name="Kawashima K."/>
            <person name="Kishida Y."/>
            <person name="Kiyokawa C."/>
            <person name="Kohara M."/>
            <person name="Matsumoto M."/>
            <person name="Matsuno A."/>
            <person name="Muraki A."/>
            <person name="Nakayama S."/>
            <person name="Nakazaki N."/>
            <person name="Shinpo S."/>
            <person name="Takeuchi C."/>
            <person name="Wada T."/>
            <person name="Watanabe A."/>
            <person name="Yamada M."/>
            <person name="Yasuda M."/>
            <person name="Tabata S."/>
        </authorList>
    </citation>
    <scope>NUCLEOTIDE SEQUENCE [LARGE SCALE GENOMIC DNA]</scope>
    <source>
        <strain>cv. Columbia</strain>
    </source>
</reference>
<reference key="2">
    <citation type="journal article" date="2017" name="Plant J.">
        <title>Araport11: a complete reannotation of the Arabidopsis thaliana reference genome.</title>
        <authorList>
            <person name="Cheng C.Y."/>
            <person name="Krishnakumar V."/>
            <person name="Chan A.P."/>
            <person name="Thibaud-Nissen F."/>
            <person name="Schobel S."/>
            <person name="Town C.D."/>
        </authorList>
    </citation>
    <scope>GENOME REANNOTATION</scope>
    <source>
        <strain>cv. Columbia</strain>
    </source>
</reference>
<reference key="3">
    <citation type="journal article" date="2003" name="Science">
        <title>Empirical analysis of transcriptional activity in the Arabidopsis genome.</title>
        <authorList>
            <person name="Yamada K."/>
            <person name="Lim J."/>
            <person name="Dale J.M."/>
            <person name="Chen H."/>
            <person name="Shinn P."/>
            <person name="Palm C.J."/>
            <person name="Southwick A.M."/>
            <person name="Wu H.C."/>
            <person name="Kim C.J."/>
            <person name="Nguyen M."/>
            <person name="Pham P.K."/>
            <person name="Cheuk R.F."/>
            <person name="Karlin-Newmann G."/>
            <person name="Liu S.X."/>
            <person name="Lam B."/>
            <person name="Sakano H."/>
            <person name="Wu T."/>
            <person name="Yu G."/>
            <person name="Miranda M."/>
            <person name="Quach H.L."/>
            <person name="Tripp M."/>
            <person name="Chang C.H."/>
            <person name="Lee J.M."/>
            <person name="Toriumi M.J."/>
            <person name="Chan M.M."/>
            <person name="Tang C.C."/>
            <person name="Onodera C.S."/>
            <person name="Deng J.M."/>
            <person name="Akiyama K."/>
            <person name="Ansari Y."/>
            <person name="Arakawa T."/>
            <person name="Banh J."/>
            <person name="Banno F."/>
            <person name="Bowser L."/>
            <person name="Brooks S.Y."/>
            <person name="Carninci P."/>
            <person name="Chao Q."/>
            <person name="Choy N."/>
            <person name="Enju A."/>
            <person name="Goldsmith A.D."/>
            <person name="Gurjal M."/>
            <person name="Hansen N.F."/>
            <person name="Hayashizaki Y."/>
            <person name="Johnson-Hopson C."/>
            <person name="Hsuan V.W."/>
            <person name="Iida K."/>
            <person name="Karnes M."/>
            <person name="Khan S."/>
            <person name="Koesema E."/>
            <person name="Ishida J."/>
            <person name="Jiang P.X."/>
            <person name="Jones T."/>
            <person name="Kawai J."/>
            <person name="Kamiya A."/>
            <person name="Meyers C."/>
            <person name="Nakajima M."/>
            <person name="Narusaka M."/>
            <person name="Seki M."/>
            <person name="Sakurai T."/>
            <person name="Satou M."/>
            <person name="Tamse R."/>
            <person name="Vaysberg M."/>
            <person name="Wallender E.K."/>
            <person name="Wong C."/>
            <person name="Yamamura Y."/>
            <person name="Yuan S."/>
            <person name="Shinozaki K."/>
            <person name="Davis R.W."/>
            <person name="Theologis A."/>
            <person name="Ecker J.R."/>
        </authorList>
    </citation>
    <scope>NUCLEOTIDE SEQUENCE [LARGE SCALE MRNA]</scope>
    <source>
        <strain>cv. Columbia</strain>
    </source>
</reference>
<reference key="4">
    <citation type="submission" date="2002-03" db="EMBL/GenBank/DDBJ databases">
        <title>Full-length cDNA from Arabidopsis thaliana.</title>
        <authorList>
            <person name="Brover V.V."/>
            <person name="Troukhan M.E."/>
            <person name="Alexandrov N.A."/>
            <person name="Lu Y.-P."/>
            <person name="Flavell R.B."/>
            <person name="Feldmann K.A."/>
        </authorList>
    </citation>
    <scope>NUCLEOTIDE SEQUENCE [LARGE SCALE MRNA]</scope>
</reference>
<reference key="5">
    <citation type="journal article" date="2010" name="Plant Physiol.">
        <title>RTM3, which controls long-distance movement of potyviruses, is a member of a new plant gene family encoding a meprin and TRAF homology domain-containing protein.</title>
        <authorList>
            <person name="Cosson P."/>
            <person name="Sofer L."/>
            <person name="Le Q.H."/>
            <person name="Leger V."/>
            <person name="Schurdi-Levraud V."/>
            <person name="Whitham S.A."/>
            <person name="Yamamoto M.L."/>
            <person name="Gopalan S."/>
            <person name="Le Gall O."/>
            <person name="Candresse T."/>
            <person name="Carrington J.C."/>
            <person name="Revers F."/>
        </authorList>
    </citation>
    <scope>GENE FAMILY</scope>
</reference>
<evidence type="ECO:0000255" key="1"/>
<evidence type="ECO:0000255" key="2">
    <source>
        <dbReference type="PROSITE-ProRule" id="PRU00129"/>
    </source>
</evidence>
<evidence type="ECO:0000305" key="3"/>
<keyword id="KW-0175">Coiled coil</keyword>
<keyword id="KW-1185">Reference proteome</keyword>
<proteinExistence type="evidence at transcript level"/>
<accession>Q9M2J6</accession>
<accession>Q8LB51</accession>
<feature type="chain" id="PRO_0000429292" description="MATH domain and coiled-coil domain-containing protein At3g58200">
    <location>
        <begin position="1"/>
        <end position="319"/>
    </location>
</feature>
<feature type="domain" description="MATH" evidence="2">
    <location>
        <begin position="6"/>
        <end position="132"/>
    </location>
</feature>
<feature type="coiled-coil region" evidence="1">
    <location>
        <begin position="255"/>
        <end position="302"/>
    </location>
</feature>
<feature type="sequence conflict" description="In Ref. 4; AAM64967." evidence="3" ref="4">
    <original>K</original>
    <variation>I</variation>
    <location>
        <position position="43"/>
    </location>
</feature>
<feature type="sequence conflict" description="In Ref. 4; AAM64967." evidence="3" ref="4">
    <original>E</original>
    <variation>G</variation>
    <location>
        <position position="168"/>
    </location>
</feature>
<feature type="sequence conflict" description="In Ref. 4; AAM64967." evidence="3" ref="4">
    <original>V</original>
    <variation>G</variation>
    <location>
        <position position="181"/>
    </location>
</feature>
<sequence>MEKEADNKFRWVIKNFSSLGSERVFSDIFVVGSCKWRLMAYPKGVRDNRCFSLFLVVTDFKTLPCDWKRHTRLRLNVVNQLSEELSILKETQMWFDQKTPAWGFLAMLPLTELKAENGGFLVNEEVKIVVEVDVVEALGKLEESEEATQPLKKVKLEAFVESKGLLKETSSVKEEIIDVNVFHVLPSQVEFVSRVFERYPEIASIFQAKKQHLRTACMYVLLSLIETLCKSLEELSNDDLVGGDNALQYLKFSGFKVDWLEKKLEEVKEKKKEEQIGETRMQEMKVFKQKCSDIEALMEREKSKLLVTRGSPLTLDDVL</sequence>
<gene>
    <name type="ordered locus">At3g58200</name>
    <name type="ORF">F9D24.110</name>
</gene>
<name>MCC15_ARATH</name>
<organism>
    <name type="scientific">Arabidopsis thaliana</name>
    <name type="common">Mouse-ear cress</name>
    <dbReference type="NCBI Taxonomy" id="3702"/>
    <lineage>
        <taxon>Eukaryota</taxon>
        <taxon>Viridiplantae</taxon>
        <taxon>Streptophyta</taxon>
        <taxon>Embryophyta</taxon>
        <taxon>Tracheophyta</taxon>
        <taxon>Spermatophyta</taxon>
        <taxon>Magnoliopsida</taxon>
        <taxon>eudicotyledons</taxon>
        <taxon>Gunneridae</taxon>
        <taxon>Pentapetalae</taxon>
        <taxon>rosids</taxon>
        <taxon>malvids</taxon>
        <taxon>Brassicales</taxon>
        <taxon>Brassicaceae</taxon>
        <taxon>Camelineae</taxon>
        <taxon>Arabidopsis</taxon>
    </lineage>
</organism>
<dbReference type="EMBL" id="AL137081">
    <property type="protein sequence ID" value="CAB68158.1"/>
    <property type="molecule type" value="Genomic_DNA"/>
</dbReference>
<dbReference type="EMBL" id="CP002686">
    <property type="protein sequence ID" value="AEE79753.1"/>
    <property type="molecule type" value="Genomic_DNA"/>
</dbReference>
<dbReference type="EMBL" id="BT004114">
    <property type="protein sequence ID" value="AAO42137.1"/>
    <property type="molecule type" value="mRNA"/>
</dbReference>
<dbReference type="EMBL" id="BT005114">
    <property type="protein sequence ID" value="AAO50647.1"/>
    <property type="molecule type" value="mRNA"/>
</dbReference>
<dbReference type="EMBL" id="AY087419">
    <property type="protein sequence ID" value="AAM64967.1"/>
    <property type="molecule type" value="mRNA"/>
</dbReference>
<dbReference type="PIR" id="T45980">
    <property type="entry name" value="T45980"/>
</dbReference>
<dbReference type="RefSeq" id="NP_191379.1">
    <property type="nucleotide sequence ID" value="NM_115682.4"/>
</dbReference>
<dbReference type="SMR" id="Q9M2J6"/>
<dbReference type="FunCoup" id="Q9M2J6">
    <property type="interactions" value="37"/>
</dbReference>
<dbReference type="PaxDb" id="3702-AT3G58200.1"/>
<dbReference type="ProteomicsDB" id="238362"/>
<dbReference type="DNASU" id="824989"/>
<dbReference type="EnsemblPlants" id="AT3G58200.1">
    <property type="protein sequence ID" value="AT3G58200.1"/>
    <property type="gene ID" value="AT3G58200"/>
</dbReference>
<dbReference type="GeneID" id="824989"/>
<dbReference type="Gramene" id="AT3G58200.1">
    <property type="protein sequence ID" value="AT3G58200.1"/>
    <property type="gene ID" value="AT3G58200"/>
</dbReference>
<dbReference type="KEGG" id="ath:AT3G58200"/>
<dbReference type="Araport" id="AT3G58200"/>
<dbReference type="TAIR" id="AT3G58200"/>
<dbReference type="eggNOG" id="KOG1987">
    <property type="taxonomic scope" value="Eukaryota"/>
</dbReference>
<dbReference type="HOGENOM" id="CLU_026537_0_0_1"/>
<dbReference type="InParanoid" id="Q9M2J6"/>
<dbReference type="OMA" id="LRTACMY"/>
<dbReference type="PhylomeDB" id="Q9M2J6"/>
<dbReference type="PRO" id="PR:Q9M2J6"/>
<dbReference type="Proteomes" id="UP000006548">
    <property type="component" value="Chromosome 3"/>
</dbReference>
<dbReference type="ExpressionAtlas" id="Q9M2J6">
    <property type="expression patterns" value="baseline and differential"/>
</dbReference>
<dbReference type="CDD" id="cd00121">
    <property type="entry name" value="MATH"/>
    <property type="match status" value="1"/>
</dbReference>
<dbReference type="Gene3D" id="2.60.210.10">
    <property type="entry name" value="Apoptosis, Tumor Necrosis Factor Receptor Associated Protein 2, Chain A"/>
    <property type="match status" value="1"/>
</dbReference>
<dbReference type="InterPro" id="IPR050804">
    <property type="entry name" value="MATH-CC_domain_protein"/>
</dbReference>
<dbReference type="InterPro" id="IPR002083">
    <property type="entry name" value="MATH/TRAF_dom"/>
</dbReference>
<dbReference type="InterPro" id="IPR008974">
    <property type="entry name" value="TRAF-like"/>
</dbReference>
<dbReference type="PANTHER" id="PTHR46236">
    <property type="entry name" value="TRAF-LIKE SUPERFAMILY PROTEIN"/>
    <property type="match status" value="1"/>
</dbReference>
<dbReference type="PANTHER" id="PTHR46236:SF11">
    <property type="entry name" value="TRAF-LIKE SUPERFAMILY PROTEIN"/>
    <property type="match status" value="1"/>
</dbReference>
<dbReference type="Pfam" id="PF22486">
    <property type="entry name" value="MATH_2"/>
    <property type="match status" value="1"/>
</dbReference>
<dbReference type="SMART" id="SM00061">
    <property type="entry name" value="MATH"/>
    <property type="match status" value="1"/>
</dbReference>
<dbReference type="SUPFAM" id="SSF49599">
    <property type="entry name" value="TRAF domain-like"/>
    <property type="match status" value="1"/>
</dbReference>
<dbReference type="PROSITE" id="PS50144">
    <property type="entry name" value="MATH"/>
    <property type="match status" value="1"/>
</dbReference>